<name>RS8_PELUB</name>
<reference key="1">
    <citation type="journal article" date="2005" name="Science">
        <title>Genome streamlining in a cosmopolitan oceanic bacterium.</title>
        <authorList>
            <person name="Giovannoni S.J."/>
            <person name="Tripp H.J."/>
            <person name="Givan S."/>
            <person name="Podar M."/>
            <person name="Vergin K.L."/>
            <person name="Baptista D."/>
            <person name="Bibbs L."/>
            <person name="Eads J."/>
            <person name="Richardson T.H."/>
            <person name="Noordewier M."/>
            <person name="Rappe M.S."/>
            <person name="Short J.M."/>
            <person name="Carrington J.C."/>
            <person name="Mathur E.J."/>
        </authorList>
    </citation>
    <scope>NUCLEOTIDE SEQUENCE [LARGE SCALE GENOMIC DNA]</scope>
    <source>
        <strain>HTCC1062</strain>
    </source>
</reference>
<evidence type="ECO:0000255" key="1">
    <source>
        <dbReference type="HAMAP-Rule" id="MF_01302"/>
    </source>
</evidence>
<evidence type="ECO:0000305" key="2"/>
<proteinExistence type="inferred from homology"/>
<accession>Q4FLN2</accession>
<feature type="chain" id="PRO_0000225878" description="Small ribosomal subunit protein uS8">
    <location>
        <begin position="1"/>
        <end position="131"/>
    </location>
</feature>
<organism>
    <name type="scientific">Pelagibacter ubique (strain HTCC1062)</name>
    <dbReference type="NCBI Taxonomy" id="335992"/>
    <lineage>
        <taxon>Bacteria</taxon>
        <taxon>Pseudomonadati</taxon>
        <taxon>Pseudomonadota</taxon>
        <taxon>Alphaproteobacteria</taxon>
        <taxon>Candidatus Pelagibacterales</taxon>
        <taxon>Candidatus Pelagibacteraceae</taxon>
        <taxon>Candidatus Pelagibacter</taxon>
    </lineage>
</organism>
<gene>
    <name evidence="1" type="primary">rpsH</name>
    <name type="ordered locus">SAR11_1103</name>
</gene>
<keyword id="KW-1185">Reference proteome</keyword>
<keyword id="KW-0687">Ribonucleoprotein</keyword>
<keyword id="KW-0689">Ribosomal protein</keyword>
<keyword id="KW-0694">RNA-binding</keyword>
<keyword id="KW-0699">rRNA-binding</keyword>
<comment type="function">
    <text evidence="1">One of the primary rRNA binding proteins, it binds directly to 16S rRNA central domain where it helps coordinate assembly of the platform of the 30S subunit.</text>
</comment>
<comment type="subunit">
    <text evidence="1">Part of the 30S ribosomal subunit. Contacts proteins S5 and S12.</text>
</comment>
<comment type="similarity">
    <text evidence="1">Belongs to the universal ribosomal protein uS8 family.</text>
</comment>
<sequence>MSLSDPIGDMIARIKNAQVRNHKKVALPSSNFKVKIADILKSEGFIKDYKIETENNKPTLSVDLKYYSGNPVISTFERVSKPGRRIFSSADSLPKINGGLGIAIVSTPKGVMTDIEARKQKVGGEIICKVF</sequence>
<dbReference type="EMBL" id="CP000084">
    <property type="protein sequence ID" value="AAZ21906.1"/>
    <property type="molecule type" value="Genomic_DNA"/>
</dbReference>
<dbReference type="RefSeq" id="WP_006996825.1">
    <property type="nucleotide sequence ID" value="NC_007205.1"/>
</dbReference>
<dbReference type="SMR" id="Q4FLN2"/>
<dbReference type="STRING" id="335992.SAR11_1103"/>
<dbReference type="GeneID" id="66295592"/>
<dbReference type="KEGG" id="pub:SAR11_1103"/>
<dbReference type="eggNOG" id="COG0096">
    <property type="taxonomic scope" value="Bacteria"/>
</dbReference>
<dbReference type="HOGENOM" id="CLU_098428_0_0_5"/>
<dbReference type="OrthoDB" id="9802617at2"/>
<dbReference type="Proteomes" id="UP000002528">
    <property type="component" value="Chromosome"/>
</dbReference>
<dbReference type="GO" id="GO:1990904">
    <property type="term" value="C:ribonucleoprotein complex"/>
    <property type="evidence" value="ECO:0007669"/>
    <property type="project" value="UniProtKB-KW"/>
</dbReference>
<dbReference type="GO" id="GO:0005840">
    <property type="term" value="C:ribosome"/>
    <property type="evidence" value="ECO:0007669"/>
    <property type="project" value="UniProtKB-KW"/>
</dbReference>
<dbReference type="GO" id="GO:0019843">
    <property type="term" value="F:rRNA binding"/>
    <property type="evidence" value="ECO:0007669"/>
    <property type="project" value="UniProtKB-UniRule"/>
</dbReference>
<dbReference type="GO" id="GO:0003735">
    <property type="term" value="F:structural constituent of ribosome"/>
    <property type="evidence" value="ECO:0007669"/>
    <property type="project" value="InterPro"/>
</dbReference>
<dbReference type="GO" id="GO:0006412">
    <property type="term" value="P:translation"/>
    <property type="evidence" value="ECO:0007669"/>
    <property type="project" value="UniProtKB-UniRule"/>
</dbReference>
<dbReference type="FunFam" id="3.30.1370.30:FF:000002">
    <property type="entry name" value="30S ribosomal protein S8"/>
    <property type="match status" value="1"/>
</dbReference>
<dbReference type="FunFam" id="3.30.1490.10:FF:000001">
    <property type="entry name" value="30S ribosomal protein S8"/>
    <property type="match status" value="1"/>
</dbReference>
<dbReference type="Gene3D" id="3.30.1370.30">
    <property type="match status" value="1"/>
</dbReference>
<dbReference type="Gene3D" id="3.30.1490.10">
    <property type="match status" value="1"/>
</dbReference>
<dbReference type="HAMAP" id="MF_01302_B">
    <property type="entry name" value="Ribosomal_uS8_B"/>
    <property type="match status" value="1"/>
</dbReference>
<dbReference type="InterPro" id="IPR000630">
    <property type="entry name" value="Ribosomal_uS8"/>
</dbReference>
<dbReference type="InterPro" id="IPR047863">
    <property type="entry name" value="Ribosomal_uS8_CS"/>
</dbReference>
<dbReference type="InterPro" id="IPR035987">
    <property type="entry name" value="Ribosomal_uS8_sf"/>
</dbReference>
<dbReference type="NCBIfam" id="NF001109">
    <property type="entry name" value="PRK00136.1"/>
    <property type="match status" value="1"/>
</dbReference>
<dbReference type="PANTHER" id="PTHR11758">
    <property type="entry name" value="40S RIBOSOMAL PROTEIN S15A"/>
    <property type="match status" value="1"/>
</dbReference>
<dbReference type="Pfam" id="PF00410">
    <property type="entry name" value="Ribosomal_S8"/>
    <property type="match status" value="1"/>
</dbReference>
<dbReference type="SUPFAM" id="SSF56047">
    <property type="entry name" value="Ribosomal protein S8"/>
    <property type="match status" value="1"/>
</dbReference>
<dbReference type="PROSITE" id="PS00053">
    <property type="entry name" value="RIBOSOMAL_S8"/>
    <property type="match status" value="1"/>
</dbReference>
<protein>
    <recommendedName>
        <fullName evidence="1">Small ribosomal subunit protein uS8</fullName>
    </recommendedName>
    <alternativeName>
        <fullName evidence="2">30S ribosomal protein S8</fullName>
    </alternativeName>
</protein>